<reference key="1">
    <citation type="submission" date="2002-02" db="EMBL/GenBank/DDBJ databases">
        <title>Second isoform of mammalian secretory pathway Ca-ATPase, SPCA2.</title>
        <authorList>
            <person name="Kostina M.B."/>
            <person name="Pestov N.B."/>
            <person name="Korneenko T.V."/>
            <person name="Shakhparonov M.I."/>
        </authorList>
    </citation>
    <scope>NUCLEOTIDE SEQUENCE [MRNA]</scope>
    <source>
        <strain>Sprague-Dawley</strain>
        <tissue>Duodenum</tissue>
    </source>
</reference>
<keyword id="KW-0067">ATP-binding</keyword>
<keyword id="KW-0106">Calcium</keyword>
<keyword id="KW-0109">Calcium transport</keyword>
<keyword id="KW-1003">Cell membrane</keyword>
<keyword id="KW-0333">Golgi apparatus</keyword>
<keyword id="KW-0406">Ion transport</keyword>
<keyword id="KW-0460">Magnesium</keyword>
<keyword id="KW-0472">Membrane</keyword>
<keyword id="KW-0479">Metal-binding</keyword>
<keyword id="KW-0547">Nucleotide-binding</keyword>
<keyword id="KW-0597">Phosphoprotein</keyword>
<keyword id="KW-1185">Reference proteome</keyword>
<keyword id="KW-1278">Translocase</keyword>
<keyword id="KW-0812">Transmembrane</keyword>
<keyword id="KW-1133">Transmembrane helix</keyword>
<keyword id="KW-0813">Transport</keyword>
<organism>
    <name type="scientific">Rattus norvegicus</name>
    <name type="common">Rat</name>
    <dbReference type="NCBI Taxonomy" id="10116"/>
    <lineage>
        <taxon>Eukaryota</taxon>
        <taxon>Metazoa</taxon>
        <taxon>Chordata</taxon>
        <taxon>Craniata</taxon>
        <taxon>Vertebrata</taxon>
        <taxon>Euteleostomi</taxon>
        <taxon>Mammalia</taxon>
        <taxon>Eutheria</taxon>
        <taxon>Euarchontoglires</taxon>
        <taxon>Glires</taxon>
        <taxon>Rodentia</taxon>
        <taxon>Myomorpha</taxon>
        <taxon>Muroidea</taxon>
        <taxon>Muridae</taxon>
        <taxon>Murinae</taxon>
        <taxon>Rattus</taxon>
    </lineage>
</organism>
<proteinExistence type="evidence at transcript level"/>
<dbReference type="EC" id="7.2.2.10" evidence="3"/>
<dbReference type="EMBL" id="AF484685">
    <property type="protein sequence ID" value="AAL91565.1"/>
    <property type="molecule type" value="mRNA"/>
</dbReference>
<dbReference type="RefSeq" id="NP_604457.1">
    <property type="nucleotide sequence ID" value="NM_134462.1"/>
</dbReference>
<dbReference type="SMR" id="Q8R4C1"/>
<dbReference type="FunCoup" id="Q8R4C1">
    <property type="interactions" value="194"/>
</dbReference>
<dbReference type="STRING" id="10116.ENSRNOP00000066506"/>
<dbReference type="PhosphoSitePlus" id="Q8R4C1"/>
<dbReference type="PaxDb" id="10116-ENSRNOP00000066506"/>
<dbReference type="Ensembl" id="ENSRNOT00000074753.3">
    <property type="protein sequence ID" value="ENSRNOP00000066506.3"/>
    <property type="gene ID" value="ENSRNOG00000049334.3"/>
</dbReference>
<dbReference type="GeneID" id="171496"/>
<dbReference type="KEGG" id="rno:171496"/>
<dbReference type="AGR" id="RGD:620647"/>
<dbReference type="CTD" id="9914"/>
<dbReference type="RGD" id="620647">
    <property type="gene designation" value="Atp2c2"/>
</dbReference>
<dbReference type="eggNOG" id="KOG0202">
    <property type="taxonomic scope" value="Eukaryota"/>
</dbReference>
<dbReference type="GeneTree" id="ENSGT00940000160275"/>
<dbReference type="InParanoid" id="Q8R4C1"/>
<dbReference type="OMA" id="IGWVQGK"/>
<dbReference type="OrthoDB" id="3352408at2759"/>
<dbReference type="PhylomeDB" id="Q8R4C1"/>
<dbReference type="Reactome" id="R-RNO-936837">
    <property type="pathway name" value="Ion transport by P-type ATPases"/>
</dbReference>
<dbReference type="PRO" id="PR:Q8R4C1"/>
<dbReference type="Proteomes" id="UP000002494">
    <property type="component" value="Chromosome 19"/>
</dbReference>
<dbReference type="GO" id="GO:0016323">
    <property type="term" value="C:basolateral plasma membrane"/>
    <property type="evidence" value="ECO:0007669"/>
    <property type="project" value="UniProtKB-SubCell"/>
</dbReference>
<dbReference type="GO" id="GO:0009898">
    <property type="term" value="C:cytoplasmic side of plasma membrane"/>
    <property type="evidence" value="ECO:0000266"/>
    <property type="project" value="RGD"/>
</dbReference>
<dbReference type="GO" id="GO:0031410">
    <property type="term" value="C:cytoplasmic vesicle"/>
    <property type="evidence" value="ECO:0000266"/>
    <property type="project" value="RGD"/>
</dbReference>
<dbReference type="GO" id="GO:0005783">
    <property type="term" value="C:endoplasmic reticulum"/>
    <property type="evidence" value="ECO:0000318"/>
    <property type="project" value="GO_Central"/>
</dbReference>
<dbReference type="GO" id="GO:0000139">
    <property type="term" value="C:Golgi membrane"/>
    <property type="evidence" value="ECO:0000318"/>
    <property type="project" value="GO_Central"/>
</dbReference>
<dbReference type="GO" id="GO:0048471">
    <property type="term" value="C:perinuclear region of cytoplasm"/>
    <property type="evidence" value="ECO:0000266"/>
    <property type="project" value="RGD"/>
</dbReference>
<dbReference type="GO" id="GO:0005886">
    <property type="term" value="C:plasma membrane"/>
    <property type="evidence" value="ECO:0000318"/>
    <property type="project" value="GO_Central"/>
</dbReference>
<dbReference type="GO" id="GO:0032588">
    <property type="term" value="C:trans-Golgi network membrane"/>
    <property type="evidence" value="ECO:0000250"/>
    <property type="project" value="UniProtKB"/>
</dbReference>
<dbReference type="GO" id="GO:0005524">
    <property type="term" value="F:ATP binding"/>
    <property type="evidence" value="ECO:0007669"/>
    <property type="project" value="UniProtKB-KW"/>
</dbReference>
<dbReference type="GO" id="GO:0016887">
    <property type="term" value="F:ATP hydrolysis activity"/>
    <property type="evidence" value="ECO:0007669"/>
    <property type="project" value="InterPro"/>
</dbReference>
<dbReference type="GO" id="GO:0046872">
    <property type="term" value="F:metal ion binding"/>
    <property type="evidence" value="ECO:0007669"/>
    <property type="project" value="UniProtKB-KW"/>
</dbReference>
<dbReference type="GO" id="GO:0005388">
    <property type="term" value="F:P-type calcium transporter activity"/>
    <property type="evidence" value="ECO:0000250"/>
    <property type="project" value="UniProtKB"/>
</dbReference>
<dbReference type="GO" id="GO:0140613">
    <property type="term" value="F:P-type manganese transporter activity"/>
    <property type="evidence" value="ECO:0000266"/>
    <property type="project" value="RGD"/>
</dbReference>
<dbReference type="GO" id="GO:0070588">
    <property type="term" value="P:calcium ion transmembrane transport"/>
    <property type="evidence" value="ECO:0000318"/>
    <property type="project" value="GO_Central"/>
</dbReference>
<dbReference type="GO" id="GO:0006874">
    <property type="term" value="P:intracellular calcium ion homeostasis"/>
    <property type="evidence" value="ECO:0000318"/>
    <property type="project" value="GO_Central"/>
</dbReference>
<dbReference type="GO" id="GO:0061180">
    <property type="term" value="P:mammary gland epithelium development"/>
    <property type="evidence" value="ECO:0000266"/>
    <property type="project" value="RGD"/>
</dbReference>
<dbReference type="GO" id="GO:0006828">
    <property type="term" value="P:manganese ion transport"/>
    <property type="evidence" value="ECO:0000318"/>
    <property type="project" value="GO_Central"/>
</dbReference>
<dbReference type="GO" id="GO:0090280">
    <property type="term" value="P:positive regulation of calcium ion import"/>
    <property type="evidence" value="ECO:0000266"/>
    <property type="project" value="RGD"/>
</dbReference>
<dbReference type="GO" id="GO:0072659">
    <property type="term" value="P:protein localization to plasma membrane"/>
    <property type="evidence" value="ECO:0000266"/>
    <property type="project" value="RGD"/>
</dbReference>
<dbReference type="CDD" id="cd02085">
    <property type="entry name" value="P-type_ATPase_SPCA"/>
    <property type="match status" value="1"/>
</dbReference>
<dbReference type="FunFam" id="2.70.150.10:FF:000008">
    <property type="entry name" value="Calcium-transporting ATPase"/>
    <property type="match status" value="1"/>
</dbReference>
<dbReference type="FunFam" id="3.40.1110.10:FF:000006">
    <property type="entry name" value="Calcium-transporting ATPase"/>
    <property type="match status" value="1"/>
</dbReference>
<dbReference type="FunFam" id="3.40.50.1000:FF:000028">
    <property type="entry name" value="Calcium-transporting P-type ATPase, putative"/>
    <property type="match status" value="1"/>
</dbReference>
<dbReference type="FunFam" id="3.40.50.1000:FF:000001">
    <property type="entry name" value="Phospholipid-transporting ATPase IC"/>
    <property type="match status" value="1"/>
</dbReference>
<dbReference type="Gene3D" id="3.40.1110.10">
    <property type="entry name" value="Calcium-transporting ATPase, cytoplasmic domain N"/>
    <property type="match status" value="1"/>
</dbReference>
<dbReference type="Gene3D" id="2.70.150.10">
    <property type="entry name" value="Calcium-transporting ATPase, cytoplasmic transduction domain A"/>
    <property type="match status" value="1"/>
</dbReference>
<dbReference type="Gene3D" id="1.20.1110.10">
    <property type="entry name" value="Calcium-transporting ATPase, transmembrane domain"/>
    <property type="match status" value="1"/>
</dbReference>
<dbReference type="Gene3D" id="3.40.50.1000">
    <property type="entry name" value="HAD superfamily/HAD-like"/>
    <property type="match status" value="1"/>
</dbReference>
<dbReference type="InterPro" id="IPR006068">
    <property type="entry name" value="ATPase_P-typ_cation-transptr_C"/>
</dbReference>
<dbReference type="InterPro" id="IPR004014">
    <property type="entry name" value="ATPase_P-typ_cation-transptr_N"/>
</dbReference>
<dbReference type="InterPro" id="IPR023299">
    <property type="entry name" value="ATPase_P-typ_cyto_dom_N"/>
</dbReference>
<dbReference type="InterPro" id="IPR018303">
    <property type="entry name" value="ATPase_P-typ_P_site"/>
</dbReference>
<dbReference type="InterPro" id="IPR023298">
    <property type="entry name" value="ATPase_P-typ_TM_dom_sf"/>
</dbReference>
<dbReference type="InterPro" id="IPR008250">
    <property type="entry name" value="ATPase_P-typ_transduc_dom_A_sf"/>
</dbReference>
<dbReference type="InterPro" id="IPR036412">
    <property type="entry name" value="HAD-like_sf"/>
</dbReference>
<dbReference type="InterPro" id="IPR023214">
    <property type="entry name" value="HAD_sf"/>
</dbReference>
<dbReference type="InterPro" id="IPR006413">
    <property type="entry name" value="P-type_ATPase_IIA_PMR1"/>
</dbReference>
<dbReference type="InterPro" id="IPR001757">
    <property type="entry name" value="P_typ_ATPase"/>
</dbReference>
<dbReference type="InterPro" id="IPR044492">
    <property type="entry name" value="P_typ_ATPase_HD_dom"/>
</dbReference>
<dbReference type="NCBIfam" id="TIGR01522">
    <property type="entry name" value="ATPase-IIA2_Ca"/>
    <property type="match status" value="1"/>
</dbReference>
<dbReference type="NCBIfam" id="TIGR01494">
    <property type="entry name" value="ATPase_P-type"/>
    <property type="match status" value="2"/>
</dbReference>
<dbReference type="PANTHER" id="PTHR42861">
    <property type="entry name" value="CALCIUM-TRANSPORTING ATPASE"/>
    <property type="match status" value="1"/>
</dbReference>
<dbReference type="Pfam" id="PF13246">
    <property type="entry name" value="Cation_ATPase"/>
    <property type="match status" value="1"/>
</dbReference>
<dbReference type="Pfam" id="PF00689">
    <property type="entry name" value="Cation_ATPase_C"/>
    <property type="match status" value="1"/>
</dbReference>
<dbReference type="Pfam" id="PF00690">
    <property type="entry name" value="Cation_ATPase_N"/>
    <property type="match status" value="1"/>
</dbReference>
<dbReference type="Pfam" id="PF00122">
    <property type="entry name" value="E1-E2_ATPase"/>
    <property type="match status" value="1"/>
</dbReference>
<dbReference type="Pfam" id="PF00702">
    <property type="entry name" value="Hydrolase"/>
    <property type="match status" value="1"/>
</dbReference>
<dbReference type="PRINTS" id="PR00119">
    <property type="entry name" value="CATATPASE"/>
</dbReference>
<dbReference type="PRINTS" id="PR00120">
    <property type="entry name" value="HATPASE"/>
</dbReference>
<dbReference type="SFLD" id="SFLDS00003">
    <property type="entry name" value="Haloacid_Dehalogenase"/>
    <property type="match status" value="1"/>
</dbReference>
<dbReference type="SFLD" id="SFLDF00027">
    <property type="entry name" value="p-type_atpase"/>
    <property type="match status" value="1"/>
</dbReference>
<dbReference type="SMART" id="SM00831">
    <property type="entry name" value="Cation_ATPase_N"/>
    <property type="match status" value="1"/>
</dbReference>
<dbReference type="SUPFAM" id="SSF81653">
    <property type="entry name" value="Calcium ATPase, transduction domain A"/>
    <property type="match status" value="1"/>
</dbReference>
<dbReference type="SUPFAM" id="SSF81665">
    <property type="entry name" value="Calcium ATPase, transmembrane domain M"/>
    <property type="match status" value="1"/>
</dbReference>
<dbReference type="SUPFAM" id="SSF56784">
    <property type="entry name" value="HAD-like"/>
    <property type="match status" value="1"/>
</dbReference>
<dbReference type="SUPFAM" id="SSF81660">
    <property type="entry name" value="Metal cation-transporting ATPase, ATP-binding domain N"/>
    <property type="match status" value="1"/>
</dbReference>
<dbReference type="PROSITE" id="PS00154">
    <property type="entry name" value="ATPASE_E1_E2"/>
    <property type="match status" value="1"/>
</dbReference>
<name>AT2C2_RAT</name>
<evidence type="ECO:0000250" key="1"/>
<evidence type="ECO:0000250" key="2">
    <source>
        <dbReference type="UniProtKB" id="A7L9Z8"/>
    </source>
</evidence>
<evidence type="ECO:0000250" key="3">
    <source>
        <dbReference type="UniProtKB" id="O75185"/>
    </source>
</evidence>
<evidence type="ECO:0000255" key="4"/>
<evidence type="ECO:0000303" key="5">
    <source ref="1"/>
</evidence>
<evidence type="ECO:0000305" key="6"/>
<protein>
    <recommendedName>
        <fullName>Calcium-transporting ATPase type 2C member 2</fullName>
        <shortName>ATPase 2C2</shortName>
        <ecNumber evidence="3">7.2.2.10</ecNumber>
    </recommendedName>
    <alternativeName>
        <fullName evidence="3">Ca(2+)/Mn(2+)-ATPase 2C2</fullName>
    </alternativeName>
    <alternativeName>
        <fullName>Secretory pathway Ca(2+)-transporting ATPase type 2</fullName>
        <shortName evidence="5">SPCA2</shortName>
    </alternativeName>
</protein>
<comment type="function">
    <text evidence="2 3">ATP-driven pump that supplies the Golgi apparatus with Ca(2+) and Mn(2+) ions, both essential cofactors for processing and trafficking of newly synthesized proteins in the secretory pathway. Within a catalytic cycle, acquires Ca(2+) or Mn(2+) ions on the cytoplasmic side of the membrane and delivers them to the lumenal side. The transfer of ions across the membrane is coupled to ATP hydrolysis and is associated with a transient phosphorylation that shifts the pump conformation from inward-facing to outward-facing state. Induces Ca(2+) influx independently of its ATP-driven pump function. At the basolateral membrane of mammary epithelial cells, interacts with Ca(2+) channel ORAI1 and mediates Ca(2+) entry independently of the Ca(2+) content of endoplasmic reticulum or Golgi stores. May facilitate transepithelial transport of large quantities of Ca(2+) for milk secretion via activation of Ca(2+) influx channels at the plasma membrane and active Ca(2+) transport at the Golgi apparatus.</text>
</comment>
<comment type="catalytic activity">
    <reaction evidence="3">
        <text>Ca(2+)(in) + ATP + H2O = Ca(2+)(out) + ADP + phosphate + H(+)</text>
        <dbReference type="Rhea" id="RHEA:18105"/>
        <dbReference type="ChEBI" id="CHEBI:15377"/>
        <dbReference type="ChEBI" id="CHEBI:15378"/>
        <dbReference type="ChEBI" id="CHEBI:29108"/>
        <dbReference type="ChEBI" id="CHEBI:30616"/>
        <dbReference type="ChEBI" id="CHEBI:43474"/>
        <dbReference type="ChEBI" id="CHEBI:456216"/>
        <dbReference type="EC" id="7.2.2.10"/>
    </reaction>
    <physiologicalReaction direction="left-to-right" evidence="3">
        <dbReference type="Rhea" id="RHEA:18106"/>
    </physiologicalReaction>
</comment>
<comment type="catalytic activity">
    <reaction evidence="3">
        <text>Mn(2+)(in) + ATP + H2O = Mn(2+)(out) + ADP + phosphate + H(+)</text>
        <dbReference type="Rhea" id="RHEA:66820"/>
        <dbReference type="ChEBI" id="CHEBI:15377"/>
        <dbReference type="ChEBI" id="CHEBI:15378"/>
        <dbReference type="ChEBI" id="CHEBI:29035"/>
        <dbReference type="ChEBI" id="CHEBI:30616"/>
        <dbReference type="ChEBI" id="CHEBI:43474"/>
        <dbReference type="ChEBI" id="CHEBI:456216"/>
    </reaction>
    <physiologicalReaction direction="left-to-right" evidence="3">
        <dbReference type="Rhea" id="RHEA:66821"/>
    </physiologicalReaction>
</comment>
<comment type="subunit">
    <text evidence="3">Interacts (via N-terminus) with ORAI1 (via N- and C-termini); this interaction regulates Ca(2+) influx at the plasma membrane.</text>
</comment>
<comment type="subcellular location">
    <subcellularLocation>
        <location evidence="3">Golgi apparatus</location>
        <location evidence="3">trans-Golgi network membrane</location>
        <topology evidence="4">Multi-pass membrane protein</topology>
    </subcellularLocation>
    <subcellularLocation>
        <location evidence="3">Cell membrane</location>
        <topology evidence="4">Multi-pass membrane protein</topology>
    </subcellularLocation>
    <subcellularLocation>
        <location evidence="2">Basolateral cell membrane</location>
        <topology evidence="4">Multi-pass membrane protein</topology>
    </subcellularLocation>
</comment>
<comment type="similarity">
    <text evidence="6">Belongs to the cation transport ATPase (P-type) (TC 3.A.3) family. Type IIA subfamily.</text>
</comment>
<feature type="chain" id="PRO_0000356157" description="Calcium-transporting ATPase type 2C member 2">
    <location>
        <begin position="1"/>
        <end position="944"/>
    </location>
</feature>
<feature type="topological domain" description="Cytoplasmic" evidence="4">
    <location>
        <begin position="1"/>
        <end position="104"/>
    </location>
</feature>
<feature type="transmembrane region" description="Helical; Name=1" evidence="4">
    <location>
        <begin position="105"/>
        <end position="125"/>
    </location>
</feature>
<feature type="topological domain" description="Extracellular" evidence="4">
    <location>
        <begin position="126"/>
        <end position="127"/>
    </location>
</feature>
<feature type="transmembrane region" description="Helical; Name=2" evidence="4">
    <location>
        <begin position="128"/>
        <end position="148"/>
    </location>
</feature>
<feature type="topological domain" description="Cytoplasmic" evidence="4">
    <location>
        <begin position="149"/>
        <end position="229"/>
    </location>
</feature>
<feature type="transmembrane region" description="Helical; Name=3" evidence="4">
    <location>
        <begin position="230"/>
        <end position="250"/>
    </location>
</feature>
<feature type="topological domain" description="Extracellular" evidence="4">
    <location>
        <begin position="251"/>
        <end position="291"/>
    </location>
</feature>
<feature type="transmembrane region" description="Helical; Name=4" evidence="4">
    <location>
        <begin position="292"/>
        <end position="312"/>
    </location>
</feature>
<feature type="topological domain" description="Cytoplasmic" evidence="4">
    <location>
        <begin position="313"/>
        <end position="329"/>
    </location>
</feature>
<feature type="transmembrane region" description="Helical; Name=5" evidence="4">
    <location>
        <begin position="330"/>
        <end position="350"/>
    </location>
</feature>
<feature type="topological domain" description="Extracellular" evidence="4">
    <location>
        <begin position="351"/>
        <end position="748"/>
    </location>
</feature>
<feature type="transmembrane region" description="Helical; Name=6" evidence="4">
    <location>
        <begin position="749"/>
        <end position="769"/>
    </location>
</feature>
<feature type="topological domain" description="Cytoplasmic" evidence="4">
    <location>
        <begin position="770"/>
        <end position="802"/>
    </location>
</feature>
<feature type="transmembrane region" description="Helical; Name=7" evidence="4">
    <location>
        <begin position="803"/>
        <end position="823"/>
    </location>
</feature>
<feature type="topological domain" description="Extracellular" evidence="4">
    <location>
        <begin position="824"/>
        <end position="835"/>
    </location>
</feature>
<feature type="transmembrane region" description="Helical; Name=8" evidence="4">
    <location>
        <begin position="836"/>
        <end position="853"/>
    </location>
</feature>
<feature type="topological domain" description="Cytoplasmic" evidence="4">
    <location>
        <begin position="854"/>
        <end position="872"/>
    </location>
</feature>
<feature type="transmembrane region" description="Helical; Name=9" evidence="4">
    <location>
        <begin position="873"/>
        <end position="893"/>
    </location>
</feature>
<feature type="topological domain" description="Extracellular" evidence="4">
    <location>
        <begin position="894"/>
        <end position="903"/>
    </location>
</feature>
<feature type="transmembrane region" description="Helical; Name=10" evidence="4">
    <location>
        <begin position="904"/>
        <end position="924"/>
    </location>
</feature>
<feature type="topological domain" description="Cytoplasmic" evidence="4">
    <location>
        <begin position="925"/>
        <end position="944"/>
    </location>
</feature>
<feature type="region of interest" description="Interaction with ORAI1" evidence="3">
    <location>
        <begin position="69"/>
        <end position="93"/>
    </location>
</feature>
<feature type="active site" description="4-aspartylphosphate intermediate" evidence="1">
    <location>
        <position position="377"/>
    </location>
</feature>
<feature type="binding site" evidence="1">
    <location>
        <position position="330"/>
    </location>
    <ligand>
        <name>Ca(2+)</name>
        <dbReference type="ChEBI" id="CHEBI:29108"/>
        <label>2</label>
    </ligand>
</feature>
<feature type="binding site" evidence="1">
    <location>
        <position position="331"/>
    </location>
    <ligand>
        <name>Ca(2+)</name>
        <dbReference type="ChEBI" id="CHEBI:29108"/>
        <label>2</label>
    </ligand>
</feature>
<feature type="binding site" evidence="1">
    <location>
        <position position="333"/>
    </location>
    <ligand>
        <name>Ca(2+)</name>
        <dbReference type="ChEBI" id="CHEBI:29108"/>
        <label>2</label>
    </ligand>
</feature>
<feature type="binding site" evidence="1">
    <location>
        <position position="335"/>
    </location>
    <ligand>
        <name>Ca(2+)</name>
        <dbReference type="ChEBI" id="CHEBI:29108"/>
        <label>2</label>
    </ligand>
</feature>
<feature type="binding site" evidence="1">
    <location>
        <position position="672"/>
    </location>
    <ligand>
        <name>Mg(2+)</name>
        <dbReference type="ChEBI" id="CHEBI:18420"/>
    </ligand>
</feature>
<feature type="binding site" evidence="1">
    <location>
        <position position="676"/>
    </location>
    <ligand>
        <name>Mg(2+)</name>
        <dbReference type="ChEBI" id="CHEBI:18420"/>
    </ligand>
</feature>
<feature type="binding site" evidence="1">
    <location>
        <position position="766"/>
    </location>
    <ligand>
        <name>Ca(2+)</name>
        <dbReference type="ChEBI" id="CHEBI:29108"/>
        <label>2</label>
    </ligand>
</feature>
<feature type="binding site" evidence="1">
    <location>
        <position position="770"/>
    </location>
    <ligand>
        <name>Ca(2+)</name>
        <dbReference type="ChEBI" id="CHEBI:29108"/>
        <label>2</label>
    </ligand>
</feature>
<feature type="modified residue" description="Phosphothreonine" evidence="3">
    <location>
        <position position="262"/>
    </location>
</feature>
<feature type="modified residue" description="Phosphoserine" evidence="3">
    <location>
        <position position="266"/>
    </location>
</feature>
<gene>
    <name type="primary">Atp2c2</name>
    <name type="synonym">Spca2</name>
</gene>
<accession>Q8R4C1</accession>
<sequence length="944" mass="103020">MGRRFKFLQKLAFLGQNHRYKALERDEVDTLIDEQYELKAIEREKAVAALPPREACKCSKEELARTFHVDLDSGLSEFAVAQRRLVHGWNEFVTDNTEPVWKKYLDQFRNPLILLLLGSSVVSVLTKEYEDAISIALAVLIVVTVGFIQEYRSEKSLEELTKLVPPECNCLRDGKLRHMLARDLVPGDVVSLSMGDRIPADIRLTEVTDLLVDESSFTGEVEPCSKTDSPLAGGGDLSTLSNVVFMGTLVQCGKGQGVVIGTGEQSQFGEVFKMMRAEETPKTPLQKSMDKLGKQLTVFSFGIIGLLMLVGWVQGKPLLSMFTIGVSLAVAAIPEGLPIVVMVTLVLGVLRMAKKRVIVKKLPIVETLGCCNVICSDKTGTLTANEMTATQLVTSDGFHAEVSGIGYSGEGTVCLLPSKEVIKEFSNVSVGKLVEAGCVANNAVVRKNAVMGQPTEGALVVLAMKMNLGSIKDSYIRKKEIPFSSEQKWMAVRCSLKNEDEEDVYFMKGAFEEVIHHCSTYNNGGIPLPLTPQQKSYCQQEEKKMGSLGLRVLALASGPELGRLTFLGLVGIIDPPRAGVKEAVQALSESDVSVKMVTGDALETALAIGRTIGLCDEKLKAMSGEEVEGMEQDALAARVRQVSVFFRTSPKHKVKIIKALQESGAIVAMTGDGVNDSVALKSADIGIAMGQTGTDVSKEAADMILVDDDFSAIMSAVEEGKGIFYNIKNFVRFQLSTSIAALSLITLSTVCNLPNPLNAMQILWVNIIMDGPPAQSLGVEPVDRDALKRPPRSVKDTILNRALILKILMSAAVILGGTLFIFWREIPENRTSTPRTTTMAFTCFVFFDLFNALSCRSQTKLIFEIGFFRNRMFLYSILGSLLGQLAVIYAPPLQKVFQTENLSALDLLLLTGLASSVFILSELLKLCEKFCSRAKADQMLPEAV</sequence>